<keyword id="KW-0963">Cytoplasm</keyword>
<keyword id="KW-0489">Methyltransferase</keyword>
<keyword id="KW-1185">Reference proteome</keyword>
<keyword id="KW-0698">rRNA processing</keyword>
<keyword id="KW-0949">S-adenosyl-L-methionine</keyword>
<keyword id="KW-0808">Transferase</keyword>
<gene>
    <name evidence="1" type="primary">rsmG</name>
    <name type="ordered locus">SAV_4310</name>
</gene>
<comment type="function">
    <text evidence="1">Specifically methylates the N7 position of guanine in position 518 of 16S rRNA.</text>
</comment>
<comment type="subcellular location">
    <subcellularLocation>
        <location evidence="1">Cytoplasm</location>
    </subcellularLocation>
</comment>
<comment type="similarity">
    <text evidence="1">Belongs to the methyltransferase superfamily. RNA methyltransferase RsmG family.</text>
</comment>
<comment type="sequence caution" evidence="2">
    <conflict type="erroneous initiation">
        <sequence resource="EMBL-CDS" id="BAC72022"/>
    </conflict>
</comment>
<name>RSMG_STRAW</name>
<sequence>MTEAAELPPAPEQAREVFGDRFADAVRYAELLAEAGVQRGLIGPREVPRLWERHLLNCAVLSEVVPEGVTVCDVGSGAGLPGIPLALVREDLKITLLEPLLRRTNFLTEVVELLGLDHVTVIRGRAEEVMGKIPPVHVVTARAVAPLDRLATWGIPLLRPYGEMLALKGDTAEEELKSAATALSKLGAVETSVLHVGEGVVDPLSTVVRVEVGESPGGVRFAAKRAKAARTGRTRRRR</sequence>
<dbReference type="EC" id="2.1.1.-" evidence="1"/>
<dbReference type="EMBL" id="BA000030">
    <property type="protein sequence ID" value="BAC72022.1"/>
    <property type="status" value="ALT_INIT"/>
    <property type="molecule type" value="Genomic_DNA"/>
</dbReference>
<dbReference type="RefSeq" id="WP_037647725.1">
    <property type="nucleotide sequence ID" value="NZ_JZJK01000079.1"/>
</dbReference>
<dbReference type="SMR" id="Q82FE3"/>
<dbReference type="GeneID" id="41541391"/>
<dbReference type="KEGG" id="sma:SAVERM_4310"/>
<dbReference type="eggNOG" id="COG0357">
    <property type="taxonomic scope" value="Bacteria"/>
</dbReference>
<dbReference type="HOGENOM" id="CLU_065341_5_0_11"/>
<dbReference type="OrthoDB" id="9808773at2"/>
<dbReference type="Proteomes" id="UP000000428">
    <property type="component" value="Chromosome"/>
</dbReference>
<dbReference type="GO" id="GO:0005829">
    <property type="term" value="C:cytosol"/>
    <property type="evidence" value="ECO:0007669"/>
    <property type="project" value="TreeGrafter"/>
</dbReference>
<dbReference type="GO" id="GO:0070043">
    <property type="term" value="F:rRNA (guanine-N7-)-methyltransferase activity"/>
    <property type="evidence" value="ECO:0007669"/>
    <property type="project" value="UniProtKB-UniRule"/>
</dbReference>
<dbReference type="FunFam" id="3.40.50.150:FF:000117">
    <property type="entry name" value="Ribosomal RNA small subunit methyltransferase G"/>
    <property type="match status" value="1"/>
</dbReference>
<dbReference type="Gene3D" id="3.40.50.150">
    <property type="entry name" value="Vaccinia Virus protein VP39"/>
    <property type="match status" value="1"/>
</dbReference>
<dbReference type="HAMAP" id="MF_00074">
    <property type="entry name" value="16SrRNA_methyltr_G"/>
    <property type="match status" value="1"/>
</dbReference>
<dbReference type="InterPro" id="IPR003682">
    <property type="entry name" value="rRNA_ssu_MeTfrase_G"/>
</dbReference>
<dbReference type="InterPro" id="IPR029063">
    <property type="entry name" value="SAM-dependent_MTases_sf"/>
</dbReference>
<dbReference type="NCBIfam" id="TIGR00138">
    <property type="entry name" value="rsmG_gidB"/>
    <property type="match status" value="1"/>
</dbReference>
<dbReference type="PANTHER" id="PTHR31760">
    <property type="entry name" value="S-ADENOSYL-L-METHIONINE-DEPENDENT METHYLTRANSFERASES SUPERFAMILY PROTEIN"/>
    <property type="match status" value="1"/>
</dbReference>
<dbReference type="PANTHER" id="PTHR31760:SF0">
    <property type="entry name" value="S-ADENOSYL-L-METHIONINE-DEPENDENT METHYLTRANSFERASES SUPERFAMILY PROTEIN"/>
    <property type="match status" value="1"/>
</dbReference>
<dbReference type="Pfam" id="PF02527">
    <property type="entry name" value="GidB"/>
    <property type="match status" value="1"/>
</dbReference>
<dbReference type="SUPFAM" id="SSF53335">
    <property type="entry name" value="S-adenosyl-L-methionine-dependent methyltransferases"/>
    <property type="match status" value="1"/>
</dbReference>
<accession>Q82FE3</accession>
<protein>
    <recommendedName>
        <fullName evidence="1">Ribosomal RNA small subunit methyltransferase G</fullName>
        <ecNumber evidence="1">2.1.1.-</ecNumber>
    </recommendedName>
    <alternativeName>
        <fullName evidence="1">16S rRNA 7-methylguanosine methyltransferase</fullName>
        <shortName evidence="1">16S rRNA m7G methyltransferase</shortName>
    </alternativeName>
</protein>
<proteinExistence type="inferred from homology"/>
<feature type="chain" id="PRO_0000184348" description="Ribosomal RNA small subunit methyltransferase G">
    <location>
        <begin position="1"/>
        <end position="238"/>
    </location>
</feature>
<feature type="binding site" evidence="1">
    <location>
        <position position="75"/>
    </location>
    <ligand>
        <name>S-adenosyl-L-methionine</name>
        <dbReference type="ChEBI" id="CHEBI:59789"/>
    </ligand>
</feature>
<feature type="binding site" evidence="1">
    <location>
        <position position="80"/>
    </location>
    <ligand>
        <name>S-adenosyl-L-methionine</name>
        <dbReference type="ChEBI" id="CHEBI:59789"/>
    </ligand>
</feature>
<feature type="binding site" evidence="1">
    <location>
        <begin position="126"/>
        <end position="127"/>
    </location>
    <ligand>
        <name>S-adenosyl-L-methionine</name>
        <dbReference type="ChEBI" id="CHEBI:59789"/>
    </ligand>
</feature>
<feature type="binding site" evidence="1">
    <location>
        <position position="142"/>
    </location>
    <ligand>
        <name>S-adenosyl-L-methionine</name>
        <dbReference type="ChEBI" id="CHEBI:59789"/>
    </ligand>
</feature>
<evidence type="ECO:0000255" key="1">
    <source>
        <dbReference type="HAMAP-Rule" id="MF_00074"/>
    </source>
</evidence>
<evidence type="ECO:0000305" key="2"/>
<organism>
    <name type="scientific">Streptomyces avermitilis (strain ATCC 31267 / DSM 46492 / JCM 5070 / NBRC 14893 / NCIMB 12804 / NRRL 8165 / MA-4680)</name>
    <dbReference type="NCBI Taxonomy" id="227882"/>
    <lineage>
        <taxon>Bacteria</taxon>
        <taxon>Bacillati</taxon>
        <taxon>Actinomycetota</taxon>
        <taxon>Actinomycetes</taxon>
        <taxon>Kitasatosporales</taxon>
        <taxon>Streptomycetaceae</taxon>
        <taxon>Streptomyces</taxon>
    </lineage>
</organism>
<reference key="1">
    <citation type="journal article" date="2001" name="Proc. Natl. Acad. Sci. U.S.A.">
        <title>Genome sequence of an industrial microorganism Streptomyces avermitilis: deducing the ability of producing secondary metabolites.</title>
        <authorList>
            <person name="Omura S."/>
            <person name="Ikeda H."/>
            <person name="Ishikawa J."/>
            <person name="Hanamoto A."/>
            <person name="Takahashi C."/>
            <person name="Shinose M."/>
            <person name="Takahashi Y."/>
            <person name="Horikawa H."/>
            <person name="Nakazawa H."/>
            <person name="Osonoe T."/>
            <person name="Kikuchi H."/>
            <person name="Shiba T."/>
            <person name="Sakaki Y."/>
            <person name="Hattori M."/>
        </authorList>
    </citation>
    <scope>NUCLEOTIDE SEQUENCE [LARGE SCALE GENOMIC DNA]</scope>
    <source>
        <strain>ATCC 31267 / DSM 46492 / JCM 5070 / NBRC 14893 / NCIMB 12804 / NRRL 8165 / MA-4680</strain>
    </source>
</reference>
<reference key="2">
    <citation type="journal article" date="2003" name="Nat. Biotechnol.">
        <title>Complete genome sequence and comparative analysis of the industrial microorganism Streptomyces avermitilis.</title>
        <authorList>
            <person name="Ikeda H."/>
            <person name="Ishikawa J."/>
            <person name="Hanamoto A."/>
            <person name="Shinose M."/>
            <person name="Kikuchi H."/>
            <person name="Shiba T."/>
            <person name="Sakaki Y."/>
            <person name="Hattori M."/>
            <person name="Omura S."/>
        </authorList>
    </citation>
    <scope>NUCLEOTIDE SEQUENCE [LARGE SCALE GENOMIC DNA]</scope>
    <source>
        <strain>ATCC 31267 / DSM 46492 / JCM 5070 / NBRC 14893 / NCIMB 12804 / NRRL 8165 / MA-4680</strain>
    </source>
</reference>